<comment type="function">
    <text evidence="1 7 10">Catalyzes the two-electron oxidation of bromide by hydrogen peroxide and generates hypobromite as a reactive intermediate which mediates the formation of sulfilimine cross-links between methionine and hydroxylysine residues within an uncross-linked collagen IV/COL4A1 NC1 hexamer (By similarity). Required for embryonic morphogenesis playing a role in epidermal elongation at the twofold stage of embryonic development (PubMed:20876652). Required post-embryonically for basement membrane integrity and muscle-epidermal attachments, and specifically in the function of basement membrane components such as the type IV collagens (PubMed:20876652, PubMed:29440357). May have a role in inhibiting axon regeneration (PubMed:20876652). May functionally antagonize the peroxidasin pxn-1 (PubMed:20876652).</text>
</comment>
<comment type="catalytic activity">
    <reaction evidence="1">
        <text>L-lysyl-[collagen] + L-methionyl-[collagen] + H2O2 = [collagen]-L-lysyl-N-S-L-methionyl-[collagen] + 2 H2O + H(+)</text>
        <dbReference type="Rhea" id="RHEA:66020"/>
        <dbReference type="Rhea" id="RHEA-COMP:12751"/>
        <dbReference type="Rhea" id="RHEA-COMP:16949"/>
        <dbReference type="Rhea" id="RHEA-COMP:16951"/>
        <dbReference type="ChEBI" id="CHEBI:15377"/>
        <dbReference type="ChEBI" id="CHEBI:15378"/>
        <dbReference type="ChEBI" id="CHEBI:16044"/>
        <dbReference type="ChEBI" id="CHEBI:16240"/>
        <dbReference type="ChEBI" id="CHEBI:29969"/>
        <dbReference type="ChEBI" id="CHEBI:166867"/>
    </reaction>
    <physiologicalReaction direction="left-to-right" evidence="1">
        <dbReference type="Rhea" id="RHEA:66021"/>
    </physiologicalReaction>
</comment>
<comment type="catalytic activity">
    <reaction evidence="1">
        <text>bromide + H2O2 = hypobromite + H2O</text>
        <dbReference type="Rhea" id="RHEA:66016"/>
        <dbReference type="ChEBI" id="CHEBI:15377"/>
        <dbReference type="ChEBI" id="CHEBI:15858"/>
        <dbReference type="ChEBI" id="CHEBI:16240"/>
        <dbReference type="ChEBI" id="CHEBI:29250"/>
    </reaction>
    <physiologicalReaction direction="left-to-right" evidence="1">
        <dbReference type="Rhea" id="RHEA:66017"/>
    </physiologicalReaction>
</comment>
<comment type="catalytic activity">
    <reaction evidence="1">
        <text>L-lysyl-[collagen] + L-methionyl-[collagen] + hypobromite = [collagen]-L-lysyl-N-S-L-methionyl-[collagen] + bromide + H2O + H(+)</text>
        <dbReference type="Rhea" id="RHEA:66024"/>
        <dbReference type="Rhea" id="RHEA-COMP:12751"/>
        <dbReference type="Rhea" id="RHEA-COMP:16949"/>
        <dbReference type="Rhea" id="RHEA-COMP:16951"/>
        <dbReference type="ChEBI" id="CHEBI:15377"/>
        <dbReference type="ChEBI" id="CHEBI:15378"/>
        <dbReference type="ChEBI" id="CHEBI:15858"/>
        <dbReference type="ChEBI" id="CHEBI:16044"/>
        <dbReference type="ChEBI" id="CHEBI:29250"/>
        <dbReference type="ChEBI" id="CHEBI:29969"/>
        <dbReference type="ChEBI" id="CHEBI:166867"/>
    </reaction>
    <physiologicalReaction direction="left-to-right" evidence="1">
        <dbReference type="Rhea" id="RHEA:66025"/>
    </physiologicalReaction>
</comment>
<comment type="catalytic activity">
    <reaction evidence="1">
        <text>L-tyrosyl-[protein] + bromide + H2O2 + H(+) = 3-bromo-L-tyrosyl-[protein] + 2 H2O</text>
        <dbReference type="Rhea" id="RHEA:69360"/>
        <dbReference type="Rhea" id="RHEA-COMP:10136"/>
        <dbReference type="Rhea" id="RHEA-COMP:17686"/>
        <dbReference type="ChEBI" id="CHEBI:15377"/>
        <dbReference type="ChEBI" id="CHEBI:15378"/>
        <dbReference type="ChEBI" id="CHEBI:15858"/>
        <dbReference type="ChEBI" id="CHEBI:16240"/>
        <dbReference type="ChEBI" id="CHEBI:46858"/>
        <dbReference type="ChEBI" id="CHEBI:183512"/>
    </reaction>
    <physiologicalReaction direction="left-to-right" evidence="1">
        <dbReference type="Rhea" id="RHEA:69361"/>
    </physiologicalReaction>
</comment>
<comment type="catalytic activity">
    <reaction evidence="1">
        <text>hypobromite + L-tyrosyl-[protein] + H(+) = 3-bromo-L-tyrosyl-[protein] + H2O</text>
        <dbReference type="Rhea" id="RHEA:69356"/>
        <dbReference type="Rhea" id="RHEA-COMP:10136"/>
        <dbReference type="Rhea" id="RHEA-COMP:17686"/>
        <dbReference type="ChEBI" id="CHEBI:15377"/>
        <dbReference type="ChEBI" id="CHEBI:15378"/>
        <dbReference type="ChEBI" id="CHEBI:29250"/>
        <dbReference type="ChEBI" id="CHEBI:46858"/>
        <dbReference type="ChEBI" id="CHEBI:183512"/>
    </reaction>
    <physiologicalReaction direction="left-to-right" evidence="1">
        <dbReference type="Rhea" id="RHEA:69357"/>
    </physiologicalReaction>
</comment>
<comment type="cofactor">
    <cofactor evidence="4">
        <name>Ca(2+)</name>
        <dbReference type="ChEBI" id="CHEBI:29108"/>
    </cofactor>
    <text evidence="4">Binds 1 Ca(2+) ion per heterodimer.</text>
</comment>
<comment type="cofactor">
    <cofactor evidence="4">
        <name>heme b</name>
        <dbReference type="ChEBI" id="CHEBI:60344"/>
    </cofactor>
    <text evidence="4">Binds 1 heme b (iron(II)-protoporphyrin IX) group covalently per heterodimer.</text>
</comment>
<comment type="subcellular location">
    <subcellularLocation>
        <location evidence="7 8">Secreted</location>
    </subcellularLocation>
    <subcellularLocation>
        <location evidence="7">Secreted</location>
        <location evidence="7">Extracellular space</location>
        <location evidence="7">Extracellular matrix</location>
        <location evidence="7">Basement membrane</location>
    </subcellularLocation>
    <text evidence="7">Localizes to the basement membrane in between the epidermis and muscles.</text>
</comment>
<comment type="tissue specificity">
    <text evidence="7 8">Expressed in vulval muscles and in some neurons including PVQ (PubMed:20876652). Expressed in the hypodermis and in coelomocytes (PubMed:25475546).</text>
</comment>
<comment type="developmental stage">
    <text evidence="7">Expressed in most differentiated epidermal cells throughout development from embryogenesis to adulthood (PubMed:20876652). In late gastrulation, expressed in epidermal precursors (PubMed:20876652).</text>
</comment>
<comment type="disruption phenotype">
    <text evidence="9">RNAi-mediated knockdown causes no neuronal defects (PubMed:26194821). Furthermore RNAi-mediated knockdown rescues the neuronal defects of the pxn-1 mutant (ok785) (PubMed:26194821).</text>
</comment>
<comment type="similarity">
    <text evidence="4">Belongs to the peroxidase family. XPO subfamily.</text>
</comment>
<sequence>MLLEFLLLIGISLSTACPSECRCAGLDVHCEGKNLTAIPGHIPIATTNLYFSNNLLNSLSKSNFQALPNLQYLDLSNNSIRDIEETLLDSFPGLKYLDLSWNKIRYVPKLSTAPNALVSLNLVHNEISRLDNDLVSHSPYMQTFLIQRNRIQSLPHDFFNSRMVPTLKTVKMAGNPWSCDCRMVNVKQFADSLFAHSNQNIFIVGKCFFPKGLRNYVFRNLSIENLECEKPEYSKTDDGMFKMSCPNNEMEGYHYDSIFLENNKEARHTAHFARDKDGSLLSNGQFTRNYQCAFYRQKQSIHMQKKMQASSSTEPPITTTTMEPMTTSTMDSMDTTESVVTMTTMPEIDTKIVFEHKQLDTTSRDGETLELKCEASGEPTPTITWLFEKQKLTESRKHKLTKNGSVLKIFPFLNTDIGQYECVASNGEESKSHIFSVSLKESEQPVIIDAPMDTNATIGQQVTLRCNAKGFPVPDVVWLFEGIRIPRRNTRYTISDNNIELTIEKVTRHDSGVFTCQAVNSVGSAVATANLLVGAELTEKVDKLLDDSTIEKIAKEAKQKVEKALSSTKDQQRMDKIESPNDLSKLFKFAINLKKVDLGKAREIYEESIRLVQMHIDNGLAFESAMISPNVSYEAVLPVSYVQTLMEKSGCQTGQFAESCEDHCFFSKYRSYDGQCNNHEHPWWGVSEMAFMRLLPPRYENGFNTPVGWEKGKRYNGYEVPNARKVSRVLIGTDETTPHSHLSAMTMQWGQFIDHDLTLTAPALTRHSYKEGAFCNRTCENADPCFNIQLEADDPKLHTGLYQKHPCMEFERNGAACGSGETSPIFQRVTYRDQLNLLTSYLDASGIYGNSEEQALELRDLYSDHGLLRFDIVSGANKPYMPFEKDSDMDCRRNFSRENPIKCFLAGDVRANEQLGLMSMHTIFLREHNRIASRLLEVNENWDGETIFQETRKLIGAMLQHITYNAWLPKILGKATYNTIIGEYKGYNPDVNPTIANEFATAALRFAHTLINTHLFRFDKDFKETKQGHLPLHNAFFAPERLVSEGGVDPLLRGLFAAPIKMPRPDQVLNKELTEKLFNRFHEVALDLAALNIQRGRDHGLPSWTEYRKFCNLTVPKTWSDMKNIVQNDTVISKLQSLYGVTENIDLWVGGVTEKRTADALMGPTLACIIADQFKRLRDGDRFWYENEEMFSKAQLRQIKKVTLSKIICTNGDDIDRIQRDIFVYHGNSTQFYEPCESLPEINLNMWTTCCDAMCSSSSTLARNAIGGDEKAKRRKRRHHHSKKSCHDKGKRRKSGDRWNHSNDICVECMCHDGEVWCKTNNFCKSQV</sequence>
<dbReference type="EC" id="1.11.2.-" evidence="1"/>
<dbReference type="EMBL" id="BX284606">
    <property type="protein sequence ID" value="CAA91999.1"/>
    <property type="molecule type" value="Genomic_DNA"/>
</dbReference>
<dbReference type="PIR" id="T23007">
    <property type="entry name" value="T23007"/>
</dbReference>
<dbReference type="RefSeq" id="NP_509834.1">
    <property type="nucleotide sequence ID" value="NM_077433.5"/>
</dbReference>
<dbReference type="SMR" id="G5EG78"/>
<dbReference type="FunCoup" id="G5EG78">
    <property type="interactions" value="303"/>
</dbReference>
<dbReference type="STRING" id="6239.K09C8.5.1"/>
<dbReference type="GlyCosmos" id="G5EG78">
    <property type="glycosylation" value="12 sites, No reported glycans"/>
</dbReference>
<dbReference type="PaxDb" id="6239-K09C8.5"/>
<dbReference type="PeptideAtlas" id="G5EG78"/>
<dbReference type="EnsemblMetazoa" id="K09C8.5.1">
    <property type="protein sequence ID" value="K09C8.5.1"/>
    <property type="gene ID" value="WBGene00004257"/>
</dbReference>
<dbReference type="GeneID" id="181288"/>
<dbReference type="KEGG" id="cel:CELE_K09C8.5"/>
<dbReference type="AGR" id="WB:WBGene00004257"/>
<dbReference type="CTD" id="181288"/>
<dbReference type="WormBase" id="K09C8.5">
    <property type="protein sequence ID" value="CE18882"/>
    <property type="gene ID" value="WBGene00004257"/>
    <property type="gene designation" value="pxn-2"/>
</dbReference>
<dbReference type="eggNOG" id="KOG0619">
    <property type="taxonomic scope" value="Eukaryota"/>
</dbReference>
<dbReference type="eggNOG" id="KOG2408">
    <property type="taxonomic scope" value="Eukaryota"/>
</dbReference>
<dbReference type="GeneTree" id="ENSGT00940000168557"/>
<dbReference type="HOGENOM" id="CLU_006087_0_0_1"/>
<dbReference type="InParanoid" id="G5EG78"/>
<dbReference type="OMA" id="MECRRNR"/>
<dbReference type="OrthoDB" id="823504at2759"/>
<dbReference type="PhylomeDB" id="G5EG78"/>
<dbReference type="Reactome" id="R-CEL-209968">
    <property type="pathway name" value="Thyroxine biosynthesis"/>
</dbReference>
<dbReference type="Reactome" id="R-CEL-6798695">
    <property type="pathway name" value="Neutrophil degranulation"/>
</dbReference>
<dbReference type="Reactome" id="R-CEL-8941413">
    <property type="pathway name" value="Events associated with phagocytolytic activity of PMN cells"/>
</dbReference>
<dbReference type="PRO" id="PR:G5EG78"/>
<dbReference type="Proteomes" id="UP000001940">
    <property type="component" value="Chromosome X"/>
</dbReference>
<dbReference type="Bgee" id="WBGene00004257">
    <property type="expression patterns" value="Expressed in embryo and 2 other cell types or tissues"/>
</dbReference>
<dbReference type="GO" id="GO:0005604">
    <property type="term" value="C:basement membrane"/>
    <property type="evidence" value="ECO:0000314"/>
    <property type="project" value="UniProtKB"/>
</dbReference>
<dbReference type="GO" id="GO:0005615">
    <property type="term" value="C:extracellular space"/>
    <property type="evidence" value="ECO:0000318"/>
    <property type="project" value="GO_Central"/>
</dbReference>
<dbReference type="GO" id="GO:0020037">
    <property type="term" value="F:heme binding"/>
    <property type="evidence" value="ECO:0007669"/>
    <property type="project" value="InterPro"/>
</dbReference>
<dbReference type="GO" id="GO:0140825">
    <property type="term" value="F:lactoperoxidase activity"/>
    <property type="evidence" value="ECO:0007669"/>
    <property type="project" value="UniProtKB-EC"/>
</dbReference>
<dbReference type="GO" id="GO:0046872">
    <property type="term" value="F:metal ion binding"/>
    <property type="evidence" value="ECO:0007669"/>
    <property type="project" value="UniProtKB-KW"/>
</dbReference>
<dbReference type="GO" id="GO:0004601">
    <property type="term" value="F:peroxidase activity"/>
    <property type="evidence" value="ECO:0000318"/>
    <property type="project" value="GO_Central"/>
</dbReference>
<dbReference type="GO" id="GO:0007411">
    <property type="term" value="P:axon guidance"/>
    <property type="evidence" value="ECO:0000315"/>
    <property type="project" value="WormBase"/>
</dbReference>
<dbReference type="GO" id="GO:0071711">
    <property type="term" value="P:basement membrane organization"/>
    <property type="evidence" value="ECO:0000315"/>
    <property type="project" value="WormBase"/>
</dbReference>
<dbReference type="GO" id="GO:0010172">
    <property type="term" value="P:embryonic body morphogenesis"/>
    <property type="evidence" value="ECO:0000315"/>
    <property type="project" value="WormBase"/>
</dbReference>
<dbReference type="GO" id="GO:0016203">
    <property type="term" value="P:muscle attachment"/>
    <property type="evidence" value="ECO:0000315"/>
    <property type="project" value="WormBase"/>
</dbReference>
<dbReference type="GO" id="GO:0048681">
    <property type="term" value="P:negative regulation of axon regeneration"/>
    <property type="evidence" value="ECO:0000315"/>
    <property type="project" value="WormBase"/>
</dbReference>
<dbReference type="GO" id="GO:0110011">
    <property type="term" value="P:regulation of basement membrane organization"/>
    <property type="evidence" value="ECO:0000315"/>
    <property type="project" value="UniProtKB"/>
</dbReference>
<dbReference type="GO" id="GO:0006979">
    <property type="term" value="P:response to oxidative stress"/>
    <property type="evidence" value="ECO:0007669"/>
    <property type="project" value="InterPro"/>
</dbReference>
<dbReference type="CDD" id="cd09826">
    <property type="entry name" value="peroxidasin_like"/>
    <property type="match status" value="1"/>
</dbReference>
<dbReference type="FunFam" id="2.60.40.10:FF:001895">
    <property type="entry name" value="PeroXidasiN (Drosophila peroxidase) homolog"/>
    <property type="match status" value="1"/>
</dbReference>
<dbReference type="FunFam" id="1.10.640.10:FF:000001">
    <property type="entry name" value="Peroxidasin homolog"/>
    <property type="match status" value="1"/>
</dbReference>
<dbReference type="FunFam" id="2.60.40.10:FF:000299">
    <property type="entry name" value="protogenin isoform X2"/>
    <property type="match status" value="1"/>
</dbReference>
<dbReference type="Gene3D" id="1.10.640.10">
    <property type="entry name" value="Haem peroxidase domain superfamily, animal type"/>
    <property type="match status" value="1"/>
</dbReference>
<dbReference type="Gene3D" id="2.60.40.10">
    <property type="entry name" value="Immunoglobulins"/>
    <property type="match status" value="2"/>
</dbReference>
<dbReference type="Gene3D" id="3.80.10.10">
    <property type="entry name" value="Ribonuclease Inhibitor"/>
    <property type="match status" value="2"/>
</dbReference>
<dbReference type="InterPro" id="IPR019791">
    <property type="entry name" value="Haem_peroxidase_animal"/>
</dbReference>
<dbReference type="InterPro" id="IPR010255">
    <property type="entry name" value="Haem_peroxidase_sf"/>
</dbReference>
<dbReference type="InterPro" id="IPR037120">
    <property type="entry name" value="Haem_peroxidase_sf_animal"/>
</dbReference>
<dbReference type="InterPro" id="IPR007110">
    <property type="entry name" value="Ig-like_dom"/>
</dbReference>
<dbReference type="InterPro" id="IPR036179">
    <property type="entry name" value="Ig-like_dom_sf"/>
</dbReference>
<dbReference type="InterPro" id="IPR013783">
    <property type="entry name" value="Ig-like_fold"/>
</dbReference>
<dbReference type="InterPro" id="IPR013098">
    <property type="entry name" value="Ig_I-set"/>
</dbReference>
<dbReference type="InterPro" id="IPR003599">
    <property type="entry name" value="Ig_sub"/>
</dbReference>
<dbReference type="InterPro" id="IPR003598">
    <property type="entry name" value="Ig_sub2"/>
</dbReference>
<dbReference type="InterPro" id="IPR001611">
    <property type="entry name" value="Leu-rich_rpt"/>
</dbReference>
<dbReference type="InterPro" id="IPR003591">
    <property type="entry name" value="Leu-rich_rpt_typical-subtyp"/>
</dbReference>
<dbReference type="InterPro" id="IPR032675">
    <property type="entry name" value="LRR_dom_sf"/>
</dbReference>
<dbReference type="InterPro" id="IPR000372">
    <property type="entry name" value="LRRNT"/>
</dbReference>
<dbReference type="InterPro" id="IPR034824">
    <property type="entry name" value="Peroxidasin_peroxidase"/>
</dbReference>
<dbReference type="PANTHER" id="PTHR11475">
    <property type="entry name" value="OXIDASE/PEROXIDASE"/>
    <property type="match status" value="1"/>
</dbReference>
<dbReference type="PANTHER" id="PTHR11475:SF140">
    <property type="entry name" value="PEROXIDASIN HOMOLOG PXN-2"/>
    <property type="match status" value="1"/>
</dbReference>
<dbReference type="Pfam" id="PF03098">
    <property type="entry name" value="An_peroxidase"/>
    <property type="match status" value="1"/>
</dbReference>
<dbReference type="Pfam" id="PF07679">
    <property type="entry name" value="I-set"/>
    <property type="match status" value="2"/>
</dbReference>
<dbReference type="Pfam" id="PF13855">
    <property type="entry name" value="LRR_8"/>
    <property type="match status" value="1"/>
</dbReference>
<dbReference type="PRINTS" id="PR00457">
    <property type="entry name" value="ANPEROXIDASE"/>
</dbReference>
<dbReference type="SMART" id="SM00409">
    <property type="entry name" value="IG"/>
    <property type="match status" value="2"/>
</dbReference>
<dbReference type="SMART" id="SM00408">
    <property type="entry name" value="IGc2"/>
    <property type="match status" value="2"/>
</dbReference>
<dbReference type="SMART" id="SM00369">
    <property type="entry name" value="LRR_TYP"/>
    <property type="match status" value="3"/>
</dbReference>
<dbReference type="SMART" id="SM00013">
    <property type="entry name" value="LRRNT"/>
    <property type="match status" value="1"/>
</dbReference>
<dbReference type="SUPFAM" id="SSF48113">
    <property type="entry name" value="Heme-dependent peroxidases"/>
    <property type="match status" value="1"/>
</dbReference>
<dbReference type="SUPFAM" id="SSF48726">
    <property type="entry name" value="Immunoglobulin"/>
    <property type="match status" value="2"/>
</dbReference>
<dbReference type="SUPFAM" id="SSF52058">
    <property type="entry name" value="L domain-like"/>
    <property type="match status" value="1"/>
</dbReference>
<dbReference type="PROSITE" id="PS50835">
    <property type="entry name" value="IG_LIKE"/>
    <property type="match status" value="2"/>
</dbReference>
<dbReference type="PROSITE" id="PS51450">
    <property type="entry name" value="LRR"/>
    <property type="match status" value="4"/>
</dbReference>
<dbReference type="PROSITE" id="PS50292">
    <property type="entry name" value="PEROXIDASE_3"/>
    <property type="match status" value="1"/>
</dbReference>
<organism evidence="12">
    <name type="scientific">Caenorhabditis elegans</name>
    <dbReference type="NCBI Taxonomy" id="6239"/>
    <lineage>
        <taxon>Eukaryota</taxon>
        <taxon>Metazoa</taxon>
        <taxon>Ecdysozoa</taxon>
        <taxon>Nematoda</taxon>
        <taxon>Chromadorea</taxon>
        <taxon>Rhabditida</taxon>
        <taxon>Rhabditina</taxon>
        <taxon>Rhabditomorpha</taxon>
        <taxon>Rhabditoidea</taxon>
        <taxon>Rhabditidae</taxon>
        <taxon>Peloderinae</taxon>
        <taxon>Caenorhabditis</taxon>
    </lineage>
</organism>
<evidence type="ECO:0000250" key="1">
    <source>
        <dbReference type="UniProtKB" id="Q92626"/>
    </source>
</evidence>
<evidence type="ECO:0000255" key="2"/>
<evidence type="ECO:0000255" key="3">
    <source>
        <dbReference type="PROSITE-ProRule" id="PRU00114"/>
    </source>
</evidence>
<evidence type="ECO:0000255" key="4">
    <source>
        <dbReference type="PROSITE-ProRule" id="PRU00298"/>
    </source>
</evidence>
<evidence type="ECO:0000255" key="5">
    <source>
        <dbReference type="PROSITE-ProRule" id="PRU00498"/>
    </source>
</evidence>
<evidence type="ECO:0000256" key="6">
    <source>
        <dbReference type="SAM" id="MobiDB-lite"/>
    </source>
</evidence>
<evidence type="ECO:0000269" key="7">
    <source>
    </source>
</evidence>
<evidence type="ECO:0000269" key="8">
    <source>
    </source>
</evidence>
<evidence type="ECO:0000269" key="9">
    <source>
    </source>
</evidence>
<evidence type="ECO:0000269" key="10">
    <source>
    </source>
</evidence>
<evidence type="ECO:0000305" key="11"/>
<evidence type="ECO:0000312" key="12">
    <source>
        <dbReference type="Proteomes" id="UP000001940"/>
    </source>
</evidence>
<evidence type="ECO:0000312" key="13">
    <source>
        <dbReference type="WormBase" id="K09C8.5"/>
    </source>
</evidence>
<feature type="signal peptide" evidence="2">
    <location>
        <begin position="1"/>
        <end position="16"/>
    </location>
</feature>
<feature type="chain" id="PRO_5003476082" description="Peroxidasin homolog pxn-2">
    <location>
        <begin position="17"/>
        <end position="1328"/>
    </location>
</feature>
<feature type="domain" description="LRRNT">
    <location>
        <begin position="17"/>
        <end position="45"/>
    </location>
</feature>
<feature type="repeat" description="LRR 1" evidence="2">
    <location>
        <begin position="42"/>
        <end position="66"/>
    </location>
</feature>
<feature type="repeat" description="LRR 2" evidence="2">
    <location>
        <begin position="67"/>
        <end position="90"/>
    </location>
</feature>
<feature type="repeat" description="LRR 3" evidence="2">
    <location>
        <begin position="92"/>
        <end position="114"/>
    </location>
</feature>
<feature type="repeat" description="LRR 4" evidence="2">
    <location>
        <begin position="116"/>
        <end position="137"/>
    </location>
</feature>
<feature type="repeat" description="LRR 5" evidence="2">
    <location>
        <begin position="138"/>
        <end position="161"/>
    </location>
</feature>
<feature type="repeat" description="LRR 6" evidence="2">
    <location>
        <begin position="164"/>
        <end position="191"/>
    </location>
</feature>
<feature type="domain" description="Ig-like C2-type 1" evidence="3">
    <location>
        <begin position="346"/>
        <end position="438"/>
    </location>
</feature>
<feature type="domain" description="Ig-like C2-type 2" evidence="3">
    <location>
        <begin position="445"/>
        <end position="532"/>
    </location>
</feature>
<feature type="repeat" description="LRR 7" evidence="2">
    <location>
        <begin position="1085"/>
        <end position="1109"/>
    </location>
</feature>
<feature type="repeat" description="LRR 8" evidence="2">
    <location>
        <begin position="1204"/>
        <end position="1225"/>
    </location>
</feature>
<feature type="region of interest" description="Disordered" evidence="6">
    <location>
        <begin position="305"/>
        <end position="332"/>
    </location>
</feature>
<feature type="region of interest" description="Disordered" evidence="6">
    <location>
        <begin position="1266"/>
        <end position="1297"/>
    </location>
</feature>
<feature type="compositionally biased region" description="Low complexity" evidence="6">
    <location>
        <begin position="310"/>
        <end position="332"/>
    </location>
</feature>
<feature type="compositionally biased region" description="Basic residues" evidence="6">
    <location>
        <begin position="1273"/>
        <end position="1295"/>
    </location>
</feature>
<feature type="active site" description="Proton acceptor" evidence="4">
    <location>
        <position position="755"/>
    </location>
</feature>
<feature type="binding site" description="covalent" evidence="4">
    <location>
        <position position="754"/>
    </location>
    <ligand>
        <name>heme b</name>
        <dbReference type="ChEBI" id="CHEBI:60344"/>
    </ligand>
</feature>
<feature type="binding site" evidence="4">
    <location>
        <position position="756"/>
    </location>
    <ligand>
        <name>Ca(2+)</name>
        <dbReference type="ChEBI" id="CHEBI:29108"/>
    </ligand>
</feature>
<feature type="binding site" evidence="4">
    <location>
        <position position="839"/>
    </location>
    <ligand>
        <name>Ca(2+)</name>
        <dbReference type="ChEBI" id="CHEBI:29108"/>
    </ligand>
</feature>
<feature type="binding site" evidence="4">
    <location>
        <position position="841"/>
    </location>
    <ligand>
        <name>Ca(2+)</name>
        <dbReference type="ChEBI" id="CHEBI:29108"/>
    </ligand>
</feature>
<feature type="binding site" evidence="4">
    <location>
        <position position="843"/>
    </location>
    <ligand>
        <name>Ca(2+)</name>
        <dbReference type="ChEBI" id="CHEBI:29108"/>
    </ligand>
</feature>
<feature type="binding site" evidence="4">
    <location>
        <position position="845"/>
    </location>
    <ligand>
        <name>Ca(2+)</name>
        <dbReference type="ChEBI" id="CHEBI:29108"/>
    </ligand>
</feature>
<feature type="binding site" description="covalent" evidence="4">
    <location>
        <position position="913"/>
    </location>
    <ligand>
        <name>heme b</name>
        <dbReference type="ChEBI" id="CHEBI:60344"/>
    </ligand>
</feature>
<feature type="binding site" description="axial binding residue" evidence="4">
    <location>
        <position position="1008"/>
    </location>
    <ligand>
        <name>heme b</name>
        <dbReference type="ChEBI" id="CHEBI:60344"/>
    </ligand>
    <ligandPart>
        <name>Fe</name>
        <dbReference type="ChEBI" id="CHEBI:18248"/>
    </ligandPart>
</feature>
<feature type="site" description="Transition state stabilizer" evidence="4">
    <location>
        <position position="910"/>
    </location>
</feature>
<feature type="glycosylation site" description="N-linked (GlcNAc...) asparagine" evidence="5">
    <location>
        <position position="34"/>
    </location>
</feature>
<feature type="glycosylation site" description="N-linked (GlcNAc...) asparagine" evidence="5">
    <location>
        <position position="77"/>
    </location>
</feature>
<feature type="glycosylation site" description="N-linked (GlcNAc...) asparagine" evidence="5">
    <location>
        <position position="220"/>
    </location>
</feature>
<feature type="glycosylation site" description="N-linked (GlcNAc...) asparagine" evidence="5">
    <location>
        <position position="403"/>
    </location>
</feature>
<feature type="glycosylation site" description="N-linked (GlcNAc...) asparagine" evidence="5">
    <location>
        <position position="455"/>
    </location>
</feature>
<feature type="glycosylation site" description="N-linked (GlcNAc...) asparagine" evidence="5">
    <location>
        <position position="630"/>
    </location>
</feature>
<feature type="glycosylation site" description="N-linked (GlcNAc...) asparagine" evidence="5">
    <location>
        <position position="776"/>
    </location>
</feature>
<feature type="glycosylation site" description="N-linked (GlcNAc...) asparagine" evidence="5">
    <location>
        <position position="894"/>
    </location>
</feature>
<feature type="glycosylation site" description="N-linked (GlcNAc...) asparagine" evidence="5">
    <location>
        <position position="1112"/>
    </location>
</feature>
<feature type="glycosylation site" description="N-linked (GlcNAc...) asparagine" evidence="5">
    <location>
        <position position="1128"/>
    </location>
</feature>
<feature type="glycosylation site" description="N-linked (GlcNAc...) asparagine" evidence="5">
    <location>
        <position position="1228"/>
    </location>
</feature>
<feature type="glycosylation site" description="N-linked (GlcNAc...) asparagine" evidence="5">
    <location>
        <position position="1300"/>
    </location>
</feature>
<feature type="disulfide bond" evidence="3">
    <location>
        <begin position="373"/>
        <end position="422"/>
    </location>
</feature>
<feature type="disulfide bond" evidence="3">
    <location>
        <begin position="466"/>
        <end position="516"/>
    </location>
</feature>
<feature type="disulfide bond" evidence="4">
    <location>
        <begin position="660"/>
        <end position="676"/>
    </location>
</feature>
<feature type="disulfide bond" evidence="4">
    <location>
        <begin position="775"/>
        <end position="785"/>
    </location>
</feature>
<feature type="disulfide bond" evidence="4">
    <location>
        <begin position="779"/>
        <end position="807"/>
    </location>
</feature>
<feature type="disulfide bond" evidence="4">
    <location>
        <begin position="1111"/>
        <end position="1168"/>
    </location>
</feature>
<feature type="disulfide bond" evidence="4">
    <location>
        <begin position="1209"/>
        <end position="1236"/>
    </location>
</feature>
<feature type="mutagenesis site" description="In ju436; viable with variably abnormal epidermal morphology (vab phenotype) in 20% of offspring. Enhances the lethality in the emb-9 b189 mutant." evidence="7 10">
    <original>H</original>
    <variation>Y</variation>
    <location>
        <position position="739"/>
    </location>
</feature>
<feature type="mutagenesis site" description="Suppresses the lethal phenotypes and enhances the variably abnormal epidermal morphology (vab phenotype) of the pxn-2 ju358 mutant." evidence="7">
    <original>H</original>
    <variation>A</variation>
    <location>
        <position position="755"/>
    </location>
</feature>
<feature type="mutagenesis site" description="In ju358; 31% embryonic and 47% larval lethality. Variably abnormal epidermal morphology (vab phenotype) in 21% of remaining offspring. Progressive detachment of body wall muscles from the epidermis during larval development and defective vulval muscle attachment, which results in egg-laying defects. Progressive distortion of the anterior pharyngeal bulb in adults. Defective axon guidance and promotes axon regrowth following injury. Basement membrane defects. The nicotinic acetylcholine receptor (nAChR) agonist levamisole suppresses the epidermal morphology defects, but only slightly suppresses the muscle detachment defects. Lethal phenotypes are suppressed, but the vab phenotype is more prevalent; when association with A-755. The lethality, epidermal morphological and egg-laying defects are suppressed in a pxn-1 mutant (ok785) background. Basement membrane defects are suppressed by the let-805 ju1123 mutant." evidence="7 10">
    <original>E</original>
    <variation>K</variation>
    <location>
        <position position="853"/>
    </location>
</feature>
<feature type="mutagenesis site" description="In ju328; about 2.5% embryonic and 2.5% larval lethality in offspring. Variably abnormal epidermal morphology (vab phenotype) in 24% of offspring." evidence="7">
    <original>R</original>
    <variation>K</variation>
    <location>
        <position position="1178"/>
    </location>
</feature>
<feature type="mutagenesis site" description="In ju379; embryonic elongation defects resulting in lethality at the three-fold stage in the majority of animals. About 25-30% embryonic and 30% larval lethality in offspring. Variably abnormal epidermal morphology (vab phenotype) in 25% of offspring." evidence="7">
    <original>G</original>
    <variation>S</variation>
    <location>
        <position position="1314"/>
    </location>
</feature>
<reference evidence="12" key="1">
    <citation type="journal article" date="1998" name="Science">
        <title>Genome sequence of the nematode C. elegans: a platform for investigating biology.</title>
        <authorList>
            <consortium name="The C. elegans sequencing consortium"/>
        </authorList>
    </citation>
    <scope>NUCLEOTIDE SEQUENCE [LARGE SCALE GENOMIC DNA]</scope>
    <source>
        <strain evidence="12">Bristol N2</strain>
    </source>
</reference>
<reference evidence="11" key="2">
    <citation type="journal article" date="2010" name="Development">
        <title>The C. elegans peroxidasin PXN-2 is essential for embryonic morphogenesis and inhibits adult axon regeneration.</title>
        <authorList>
            <person name="Gotenstein J.R."/>
            <person name="Swale R.E."/>
            <person name="Fukuda T."/>
            <person name="Wu Z."/>
            <person name="Giurumescu C.A."/>
            <person name="Goncharov A."/>
            <person name="Jin Y."/>
            <person name="Chisholm A.D."/>
        </authorList>
    </citation>
    <scope>FUNCTION</scope>
    <scope>SUBCELLULAR LOCATION</scope>
    <scope>TISSUE SPECIFICITY</scope>
    <scope>DEVELOPMENTAL STAGE</scope>
    <scope>MUTAGENESIS OF HIS-739; HIS-755; GLU-853; ARG-1178 AND GLY-1314</scope>
</reference>
<reference evidence="11" key="3">
    <citation type="journal article" date="2015" name="Mol. Cells">
        <title>A role for peroxidasin PXN-1 in aspects of C. elegans development.</title>
        <authorList>
            <person name="Lee J."/>
            <person name="Bandyopadhyay J."/>
            <person name="Lee J.I."/>
            <person name="Cho I."/>
            <person name="Park D."/>
            <person name="Cho J.H."/>
        </authorList>
    </citation>
    <scope>SUBCELLULAR LOCATION</scope>
    <scope>TISSUE SPECIFICITY</scope>
</reference>
<reference evidence="11" key="4">
    <citation type="journal article" date="2015" name="Mol. Cells">
        <title>pxn-1 and pxn-2 May Interact Negatively during Neuronal Development and Aging in C. elegans.</title>
        <authorList>
            <person name="Cho I."/>
            <person name="Hwang G.J."/>
            <person name="Cho J.H."/>
        </authorList>
    </citation>
    <scope>DISRUPTION PHENOTYPE</scope>
</reference>
<reference evidence="11" key="5">
    <citation type="journal article" date="2018" name="Genetics">
        <title>Genetic Suppression of Basement Membrane Defects in Caenorhabditis elegans by Gain of Function in Extracellular Matrix and Cell-Matrix Attachment Genes.</title>
        <authorList>
            <person name="Gotenstein J.R."/>
            <person name="Koo C.C."/>
            <person name="Ho T.W."/>
            <person name="Chisholm A.D."/>
        </authorList>
    </citation>
    <scope>FUNCTION</scope>
    <scope>MUTAGENESIS OF HIS-739 AND GLU-853</scope>
</reference>
<gene>
    <name evidence="13" type="primary">pxn-2</name>
    <name evidence="13" type="ORF">K09C8.5</name>
</gene>
<keyword id="KW-0084">Basement membrane</keyword>
<keyword id="KW-1015">Disulfide bond</keyword>
<keyword id="KW-0272">Extracellular matrix</keyword>
<keyword id="KW-0325">Glycoprotein</keyword>
<keyword id="KW-0349">Heme</keyword>
<keyword id="KW-0408">Iron</keyword>
<keyword id="KW-0433">Leucine-rich repeat</keyword>
<keyword id="KW-0479">Metal-binding</keyword>
<keyword id="KW-0560">Oxidoreductase</keyword>
<keyword id="KW-0575">Peroxidase</keyword>
<keyword id="KW-1185">Reference proteome</keyword>
<keyword id="KW-0677">Repeat</keyword>
<keyword id="KW-0964">Secreted</keyword>
<keyword id="KW-0732">Signal</keyword>
<name>PXDN2_CAEEL</name>
<protein>
    <recommendedName>
        <fullName evidence="11">Peroxidasin homolog pxn-2</fullName>
        <ecNumber evidence="1">1.11.2.-</ecNumber>
    </recommendedName>
</protein>
<accession>G5EG78</accession>
<proteinExistence type="evidence at protein level"/>